<feature type="chain" id="PRO_1000040493" description="6,7-dimethyl-8-ribityllumazine synthase">
    <location>
        <begin position="1"/>
        <end position="155"/>
    </location>
</feature>
<feature type="active site" description="Proton donor" evidence="1">
    <location>
        <position position="89"/>
    </location>
</feature>
<feature type="binding site" evidence="1">
    <location>
        <position position="22"/>
    </location>
    <ligand>
        <name>5-amino-6-(D-ribitylamino)uracil</name>
        <dbReference type="ChEBI" id="CHEBI:15934"/>
    </ligand>
</feature>
<feature type="binding site" evidence="1">
    <location>
        <begin position="57"/>
        <end position="59"/>
    </location>
    <ligand>
        <name>5-amino-6-(D-ribitylamino)uracil</name>
        <dbReference type="ChEBI" id="CHEBI:15934"/>
    </ligand>
</feature>
<feature type="binding site" evidence="1">
    <location>
        <begin position="81"/>
        <end position="83"/>
    </location>
    <ligand>
        <name>5-amino-6-(D-ribitylamino)uracil</name>
        <dbReference type="ChEBI" id="CHEBI:15934"/>
    </ligand>
</feature>
<feature type="binding site" evidence="1">
    <location>
        <begin position="86"/>
        <end position="87"/>
    </location>
    <ligand>
        <name>(2S)-2-hydroxy-3-oxobutyl phosphate</name>
        <dbReference type="ChEBI" id="CHEBI:58830"/>
    </ligand>
</feature>
<feature type="binding site" evidence="1">
    <location>
        <position position="114"/>
    </location>
    <ligand>
        <name>5-amino-6-(D-ribitylamino)uracil</name>
        <dbReference type="ChEBI" id="CHEBI:15934"/>
    </ligand>
</feature>
<feature type="binding site" evidence="1">
    <location>
        <position position="128"/>
    </location>
    <ligand>
        <name>(2S)-2-hydroxy-3-oxobutyl phosphate</name>
        <dbReference type="ChEBI" id="CHEBI:58830"/>
    </ligand>
</feature>
<organism>
    <name type="scientific">Psychromonas ingrahamii (strain DSM 17664 / CCUG 51855 / 37)</name>
    <dbReference type="NCBI Taxonomy" id="357804"/>
    <lineage>
        <taxon>Bacteria</taxon>
        <taxon>Pseudomonadati</taxon>
        <taxon>Pseudomonadota</taxon>
        <taxon>Gammaproteobacteria</taxon>
        <taxon>Alteromonadales</taxon>
        <taxon>Psychromonadaceae</taxon>
        <taxon>Psychromonas</taxon>
    </lineage>
</organism>
<sequence>MKIIEGGLAAPQAQIAIVISRFNSFINEQLLAGAIDTLKRTGQVADDNITVVRVPGAVELPLVAKRVAASKKFDAIIALGTVIRGGTPHFEFVAGECNKGLGQVSMDFDIPVSFGVLTTDSIEQAIERAGTKMGNKGSEAALSALEMVNVMAEFK</sequence>
<reference key="1">
    <citation type="journal article" date="2008" name="BMC Genomics">
        <title>Genomics of an extreme psychrophile, Psychromonas ingrahamii.</title>
        <authorList>
            <person name="Riley M."/>
            <person name="Staley J.T."/>
            <person name="Danchin A."/>
            <person name="Wang T.Z."/>
            <person name="Brettin T.S."/>
            <person name="Hauser L.J."/>
            <person name="Land M.L."/>
            <person name="Thompson L.S."/>
        </authorList>
    </citation>
    <scope>NUCLEOTIDE SEQUENCE [LARGE SCALE GENOMIC DNA]</scope>
    <source>
        <strain>DSM 17664 / CCUG 51855 / 37</strain>
    </source>
</reference>
<protein>
    <recommendedName>
        <fullName evidence="1">6,7-dimethyl-8-ribityllumazine synthase</fullName>
        <shortName evidence="1">DMRL synthase</shortName>
        <shortName evidence="1">LS</shortName>
        <shortName evidence="1">Lumazine synthase</shortName>
        <ecNumber evidence="1">2.5.1.78</ecNumber>
    </recommendedName>
</protein>
<accession>A1SUU5</accession>
<evidence type="ECO:0000255" key="1">
    <source>
        <dbReference type="HAMAP-Rule" id="MF_00178"/>
    </source>
</evidence>
<keyword id="KW-1185">Reference proteome</keyword>
<keyword id="KW-0686">Riboflavin biosynthesis</keyword>
<keyword id="KW-0808">Transferase</keyword>
<name>RISB_PSYIN</name>
<gene>
    <name evidence="1" type="primary">ribH</name>
    <name type="ordered locus">Ping_1443</name>
</gene>
<proteinExistence type="inferred from homology"/>
<comment type="function">
    <text evidence="1">Catalyzes the formation of 6,7-dimethyl-8-ribityllumazine by condensation of 5-amino-6-(D-ribitylamino)uracil with 3,4-dihydroxy-2-butanone 4-phosphate. This is the penultimate step in the biosynthesis of riboflavin.</text>
</comment>
<comment type="catalytic activity">
    <reaction evidence="1">
        <text>(2S)-2-hydroxy-3-oxobutyl phosphate + 5-amino-6-(D-ribitylamino)uracil = 6,7-dimethyl-8-(1-D-ribityl)lumazine + phosphate + 2 H2O + H(+)</text>
        <dbReference type="Rhea" id="RHEA:26152"/>
        <dbReference type="ChEBI" id="CHEBI:15377"/>
        <dbReference type="ChEBI" id="CHEBI:15378"/>
        <dbReference type="ChEBI" id="CHEBI:15934"/>
        <dbReference type="ChEBI" id="CHEBI:43474"/>
        <dbReference type="ChEBI" id="CHEBI:58201"/>
        <dbReference type="ChEBI" id="CHEBI:58830"/>
        <dbReference type="EC" id="2.5.1.78"/>
    </reaction>
</comment>
<comment type="pathway">
    <text evidence="1">Cofactor biosynthesis; riboflavin biosynthesis; riboflavin from 2-hydroxy-3-oxobutyl phosphate and 5-amino-6-(D-ribitylamino)uracil: step 1/2.</text>
</comment>
<comment type="subunit">
    <text evidence="1">Forms an icosahedral capsid composed of 60 subunits, arranged as a dodecamer of pentamers.</text>
</comment>
<comment type="similarity">
    <text evidence="1">Belongs to the DMRL synthase family.</text>
</comment>
<dbReference type="EC" id="2.5.1.78" evidence="1"/>
<dbReference type="EMBL" id="CP000510">
    <property type="protein sequence ID" value="ABM03260.1"/>
    <property type="molecule type" value="Genomic_DNA"/>
</dbReference>
<dbReference type="RefSeq" id="WP_011769820.1">
    <property type="nucleotide sequence ID" value="NC_008709.1"/>
</dbReference>
<dbReference type="SMR" id="A1SUU5"/>
<dbReference type="STRING" id="357804.Ping_1443"/>
<dbReference type="KEGG" id="pin:Ping_1443"/>
<dbReference type="eggNOG" id="COG0054">
    <property type="taxonomic scope" value="Bacteria"/>
</dbReference>
<dbReference type="HOGENOM" id="CLU_089358_1_1_6"/>
<dbReference type="OrthoDB" id="9809709at2"/>
<dbReference type="UniPathway" id="UPA00275">
    <property type="reaction ID" value="UER00404"/>
</dbReference>
<dbReference type="Proteomes" id="UP000000639">
    <property type="component" value="Chromosome"/>
</dbReference>
<dbReference type="GO" id="GO:0005829">
    <property type="term" value="C:cytosol"/>
    <property type="evidence" value="ECO:0007669"/>
    <property type="project" value="TreeGrafter"/>
</dbReference>
<dbReference type="GO" id="GO:0009349">
    <property type="term" value="C:riboflavin synthase complex"/>
    <property type="evidence" value="ECO:0007669"/>
    <property type="project" value="InterPro"/>
</dbReference>
<dbReference type="GO" id="GO:0000906">
    <property type="term" value="F:6,7-dimethyl-8-ribityllumazine synthase activity"/>
    <property type="evidence" value="ECO:0007669"/>
    <property type="project" value="UniProtKB-UniRule"/>
</dbReference>
<dbReference type="GO" id="GO:0009231">
    <property type="term" value="P:riboflavin biosynthetic process"/>
    <property type="evidence" value="ECO:0007669"/>
    <property type="project" value="UniProtKB-UniRule"/>
</dbReference>
<dbReference type="CDD" id="cd09209">
    <property type="entry name" value="Lumazine_synthase-I"/>
    <property type="match status" value="1"/>
</dbReference>
<dbReference type="FunFam" id="3.40.50.960:FF:000001">
    <property type="entry name" value="6,7-dimethyl-8-ribityllumazine synthase"/>
    <property type="match status" value="1"/>
</dbReference>
<dbReference type="Gene3D" id="3.40.50.960">
    <property type="entry name" value="Lumazine/riboflavin synthase"/>
    <property type="match status" value="1"/>
</dbReference>
<dbReference type="HAMAP" id="MF_00178">
    <property type="entry name" value="Lumazine_synth"/>
    <property type="match status" value="1"/>
</dbReference>
<dbReference type="InterPro" id="IPR034964">
    <property type="entry name" value="LS"/>
</dbReference>
<dbReference type="InterPro" id="IPR002180">
    <property type="entry name" value="LS/RS"/>
</dbReference>
<dbReference type="InterPro" id="IPR036467">
    <property type="entry name" value="LS/RS_sf"/>
</dbReference>
<dbReference type="NCBIfam" id="TIGR00114">
    <property type="entry name" value="lumazine-synth"/>
    <property type="match status" value="1"/>
</dbReference>
<dbReference type="NCBIfam" id="NF000812">
    <property type="entry name" value="PRK00061.1-4"/>
    <property type="match status" value="1"/>
</dbReference>
<dbReference type="PANTHER" id="PTHR21058:SF0">
    <property type="entry name" value="6,7-DIMETHYL-8-RIBITYLLUMAZINE SYNTHASE"/>
    <property type="match status" value="1"/>
</dbReference>
<dbReference type="PANTHER" id="PTHR21058">
    <property type="entry name" value="6,7-DIMETHYL-8-RIBITYLLUMAZINE SYNTHASE DMRL SYNTHASE LUMAZINE SYNTHASE"/>
    <property type="match status" value="1"/>
</dbReference>
<dbReference type="Pfam" id="PF00885">
    <property type="entry name" value="DMRL_synthase"/>
    <property type="match status" value="1"/>
</dbReference>
<dbReference type="SUPFAM" id="SSF52121">
    <property type="entry name" value="Lumazine synthase"/>
    <property type="match status" value="1"/>
</dbReference>